<evidence type="ECO:0000255" key="1">
    <source>
        <dbReference type="PROSITE-ProRule" id="PRU00285"/>
    </source>
</evidence>
<evidence type="ECO:0000256" key="2">
    <source>
        <dbReference type="SAM" id="MobiDB-lite"/>
    </source>
</evidence>
<name>HSP12_SOYBN</name>
<gene>
    <name type="primary">HSP6834-A</name>
</gene>
<proteinExistence type="inferred from homology"/>
<organism>
    <name type="scientific">Glycine max</name>
    <name type="common">Soybean</name>
    <name type="synonym">Glycine hispida</name>
    <dbReference type="NCBI Taxonomy" id="3847"/>
    <lineage>
        <taxon>Eukaryota</taxon>
        <taxon>Viridiplantae</taxon>
        <taxon>Streptophyta</taxon>
        <taxon>Embryophyta</taxon>
        <taxon>Tracheophyta</taxon>
        <taxon>Spermatophyta</taxon>
        <taxon>Magnoliopsida</taxon>
        <taxon>eudicotyledons</taxon>
        <taxon>Gunneridae</taxon>
        <taxon>Pentapetalae</taxon>
        <taxon>rosids</taxon>
        <taxon>fabids</taxon>
        <taxon>Fabales</taxon>
        <taxon>Fabaceae</taxon>
        <taxon>Papilionoideae</taxon>
        <taxon>50 kb inversion clade</taxon>
        <taxon>NPAAA clade</taxon>
        <taxon>indigoferoid/millettioid clade</taxon>
        <taxon>Phaseoleae</taxon>
        <taxon>Glycine</taxon>
        <taxon>Glycine subgen. Soja</taxon>
    </lineage>
</organism>
<accession>P02520</accession>
<dbReference type="EMBL" id="X01105">
    <property type="protein sequence ID" value="CAA25580.1"/>
    <property type="molecule type" value="Genomic_DNA"/>
</dbReference>
<dbReference type="PIR" id="A02923">
    <property type="entry name" value="HHSY34"/>
</dbReference>
<dbReference type="SMR" id="P02520"/>
<dbReference type="STRING" id="3847.P02520"/>
<dbReference type="HOGENOM" id="CLU_046737_5_0_1"/>
<dbReference type="InParanoid" id="P02520"/>
<dbReference type="Proteomes" id="UP000008827">
    <property type="component" value="Unplaced"/>
</dbReference>
<dbReference type="GO" id="GO:0005737">
    <property type="term" value="C:cytoplasm"/>
    <property type="evidence" value="ECO:0007669"/>
    <property type="project" value="UniProtKB-SubCell"/>
</dbReference>
<dbReference type="GO" id="GO:0051082">
    <property type="term" value="F:unfolded protein binding"/>
    <property type="evidence" value="ECO:0000318"/>
    <property type="project" value="GO_Central"/>
</dbReference>
<dbReference type="GO" id="GO:0051259">
    <property type="term" value="P:protein complex oligomerization"/>
    <property type="evidence" value="ECO:0000318"/>
    <property type="project" value="GO_Central"/>
</dbReference>
<dbReference type="GO" id="GO:0006457">
    <property type="term" value="P:protein folding"/>
    <property type="evidence" value="ECO:0000318"/>
    <property type="project" value="GO_Central"/>
</dbReference>
<dbReference type="GO" id="GO:0009408">
    <property type="term" value="P:response to heat"/>
    <property type="evidence" value="ECO:0000318"/>
    <property type="project" value="GO_Central"/>
</dbReference>
<dbReference type="GO" id="GO:0042542">
    <property type="term" value="P:response to hydrogen peroxide"/>
    <property type="evidence" value="ECO:0000318"/>
    <property type="project" value="GO_Central"/>
</dbReference>
<dbReference type="GO" id="GO:0009651">
    <property type="term" value="P:response to salt stress"/>
    <property type="evidence" value="ECO:0000318"/>
    <property type="project" value="GO_Central"/>
</dbReference>
<dbReference type="Gene3D" id="2.60.40.790">
    <property type="match status" value="1"/>
</dbReference>
<dbReference type="InterPro" id="IPR002068">
    <property type="entry name" value="A-crystallin/Hsp20_dom"/>
</dbReference>
<dbReference type="InterPro" id="IPR008978">
    <property type="entry name" value="HSP20-like_chaperone"/>
</dbReference>
<dbReference type="InterPro" id="IPR031107">
    <property type="entry name" value="Small_HSP"/>
</dbReference>
<dbReference type="PANTHER" id="PTHR11527">
    <property type="entry name" value="HEAT-SHOCK PROTEIN 20 FAMILY MEMBER"/>
    <property type="match status" value="1"/>
</dbReference>
<dbReference type="Pfam" id="PF00011">
    <property type="entry name" value="HSP20"/>
    <property type="match status" value="1"/>
</dbReference>
<dbReference type="SUPFAM" id="SSF49764">
    <property type="entry name" value="HSP20-like chaperones"/>
    <property type="match status" value="1"/>
</dbReference>
<dbReference type="PROSITE" id="PS01031">
    <property type="entry name" value="SHSP"/>
    <property type="match status" value="1"/>
</dbReference>
<protein>
    <recommendedName>
        <fullName>Class I heat shock protein</fullName>
    </recommendedName>
</protein>
<feature type="chain" id="PRO_0000125985" description="Class I heat shock protein">
    <location>
        <begin position="1" status="less than"/>
        <end position="74"/>
    </location>
</feature>
<feature type="domain" description="sHSP" evidence="1">
    <location>
        <begin position="1" status="less than"/>
        <end position="74"/>
    </location>
</feature>
<feature type="region of interest" description="Disordered" evidence="2">
    <location>
        <begin position="1"/>
        <end position="20"/>
    </location>
</feature>
<feature type="compositionally biased region" description="Basic and acidic residues" evidence="2">
    <location>
        <begin position="8"/>
        <end position="20"/>
    </location>
</feature>
<feature type="non-terminal residue">
    <location>
        <position position="1"/>
    </location>
</feature>
<reference key="1">
    <citation type="journal article" date="1984" name="EMBO J.">
        <title>The DNA sequence analysis of soybean heat-shock genes and identification of possible regulatory promoter elements.</title>
        <authorList>
            <person name="Schoffl F."/>
            <person name="Raschke E."/>
            <person name="Nagao R.T."/>
        </authorList>
    </citation>
    <scope>NUCLEOTIDE SEQUENCE [GENOMIC DNA]</scope>
</reference>
<sequence>ILQISGERNVEKEDKNDTWHRVERSSGKFMRSFRLPDNAKVDQVKASMENGVLTVTVPKEEIKKPDVKAIEISG</sequence>
<comment type="subunit">
    <text>Forms oligomeric structures.</text>
</comment>
<comment type="subcellular location">
    <subcellularLocation>
        <location>Cytoplasm</location>
    </subcellularLocation>
</comment>
<comment type="similarity">
    <text evidence="1">Belongs to the small heat shock protein (HSP20) family.</text>
</comment>
<keyword id="KW-0963">Cytoplasm</keyword>
<keyword id="KW-1185">Reference proteome</keyword>
<keyword id="KW-0346">Stress response</keyword>